<proteinExistence type="inferred from homology"/>
<sequence length="103" mass="11381">MTGRGKGGKGLGKGGAKRHRKVLRDNIQGITKPAIRRLARRGGVKRISGLIYEETRGVLKVFLENVIRDAVTYTEHAKRKTVTAMDVVYALKRQGRTLYGFGG</sequence>
<evidence type="ECO:0000250" key="1"/>
<evidence type="ECO:0000250" key="2">
    <source>
        <dbReference type="UniProtKB" id="P62805"/>
    </source>
</evidence>
<evidence type="ECO:0000250" key="3">
    <source>
        <dbReference type="UniProtKB" id="P84040"/>
    </source>
</evidence>
<evidence type="ECO:0000256" key="4">
    <source>
        <dbReference type="SAM" id="MobiDB-lite"/>
    </source>
</evidence>
<evidence type="ECO:0000305" key="5"/>
<reference key="1">
    <citation type="journal article" date="1990" name="Nucleic Acids Res.">
        <title>Isolation and characterization of a Drosophila hydei histone DNA repeat unit.</title>
        <authorList>
            <person name="Kremer H."/>
            <person name="Hennig W."/>
        </authorList>
    </citation>
    <scope>NUCLEOTIDE SEQUENCE [GENOMIC DNA] (HIS4)</scope>
</reference>
<reference key="2">
    <citation type="journal article" date="1993" name="Mol. Biol. Evol.">
        <title>Low codon bias and high rates of synonymous substitution in Drosophila hydei and D. melanogaster histone genes.</title>
        <authorList>
            <person name="Fitch D.H."/>
            <person name="Strausbaugh L.D."/>
        </authorList>
    </citation>
    <scope>NUCLEOTIDE SEQUENCE [GENOMIC DNA] (HIS4)</scope>
</reference>
<reference key="3">
    <citation type="journal article" date="1996" name="FEBS Lett.">
        <title>Identification and characterization of the Drosophila histone H4 replacement gene.</title>
        <authorList>
            <person name="Akhmanova A."/>
            <person name="Miedema K."/>
            <person name="Hennig W."/>
        </authorList>
    </citation>
    <scope>NUCLEOTIDE SEQUENCE [MRNA] (HIS4R)</scope>
    <source>
        <strain>Tuebingen</strain>
    </source>
</reference>
<dbReference type="EMBL" id="X17072">
    <property type="protein sequence ID" value="CAA34920.1"/>
    <property type="molecule type" value="Genomic_DNA"/>
</dbReference>
<dbReference type="EMBL" id="X52576">
    <property type="protein sequence ID" value="CAA36806.1"/>
    <property type="molecule type" value="Genomic_DNA"/>
</dbReference>
<dbReference type="EMBL" id="X97436">
    <property type="protein sequence ID" value="CAA66066.1"/>
    <property type="molecule type" value="mRNA"/>
</dbReference>
<dbReference type="PIR" id="S09656">
    <property type="entry name" value="S09656"/>
</dbReference>
<dbReference type="SMR" id="P84042"/>
<dbReference type="EnsemblMetazoa" id="XM_023309533.2">
    <property type="protein sequence ID" value="XP_023165301.1"/>
    <property type="gene ID" value="LOC111595691"/>
</dbReference>
<dbReference type="EnsemblMetazoa" id="XM_030223130.1">
    <property type="protein sequence ID" value="XP_030078990.1"/>
    <property type="gene ID" value="LOC115482880"/>
</dbReference>
<dbReference type="EnsemblMetazoa" id="XM_030223131.1">
    <property type="protein sequence ID" value="XP_030078991.1"/>
    <property type="gene ID" value="LOC115482881"/>
</dbReference>
<dbReference type="EnsemblMetazoa" id="XM_030223132.1">
    <property type="protein sequence ID" value="XP_030078992.1"/>
    <property type="gene ID" value="LOC115482882"/>
</dbReference>
<dbReference type="EnsemblMetazoa" id="XM_030223133.1">
    <property type="protein sequence ID" value="XP_030078993.1"/>
    <property type="gene ID" value="LOC115482883"/>
</dbReference>
<dbReference type="EnsemblMetazoa" id="XM_030223134.1">
    <property type="protein sequence ID" value="XP_030078994.1"/>
    <property type="gene ID" value="LOC115482884"/>
</dbReference>
<dbReference type="EnsemblMetazoa" id="XM_030223140.1">
    <property type="protein sequence ID" value="XP_030079000.1"/>
    <property type="gene ID" value="LOC115482891"/>
</dbReference>
<dbReference type="EnsemblMetazoa" id="XM_030223141.1">
    <property type="protein sequence ID" value="XP_030079001.1"/>
    <property type="gene ID" value="LOC115482892"/>
</dbReference>
<dbReference type="EnsemblMetazoa" id="XM_030223151.1">
    <property type="protein sequence ID" value="XP_030079011.1"/>
    <property type="gene ID" value="LOC115482905"/>
</dbReference>
<dbReference type="EnsemblMetazoa" id="XM_030224376.1">
    <property type="protein sequence ID" value="XP_030080236.1"/>
    <property type="gene ID" value="LOC115483191"/>
</dbReference>
<dbReference type="EnsemblMetazoa" id="XM_030224377.1">
    <property type="protein sequence ID" value="XP_030080237.1"/>
    <property type="gene ID" value="LOC115483192"/>
</dbReference>
<dbReference type="EnsemblMetazoa" id="XM_030224605.1">
    <property type="protein sequence ID" value="XP_030080465.1"/>
    <property type="gene ID" value="LOC115483260"/>
</dbReference>
<dbReference type="EnsemblMetazoa" id="XM_030224606.1">
    <property type="protein sequence ID" value="XP_030080466.1"/>
    <property type="gene ID" value="LOC115483261"/>
</dbReference>
<dbReference type="EnsemblMetazoa" id="XM_030224607.1">
    <property type="protein sequence ID" value="XP_030080467.1"/>
    <property type="gene ID" value="LOC115483262"/>
</dbReference>
<dbReference type="EnsemblMetazoa" id="XM_030224608.1">
    <property type="protein sequence ID" value="XP_030080468.1"/>
    <property type="gene ID" value="LOC115483263"/>
</dbReference>
<dbReference type="EnsemblMetazoa" id="XM_030224609.1">
    <property type="protein sequence ID" value="XP_030080469.1"/>
    <property type="gene ID" value="LOC115483264"/>
</dbReference>
<dbReference type="EnsemblMetazoa" id="XM_030224610.1">
    <property type="protein sequence ID" value="XP_030080470.1"/>
    <property type="gene ID" value="LOC115483265"/>
</dbReference>
<dbReference type="EnsemblMetazoa" id="XM_030224615.1">
    <property type="protein sequence ID" value="XP_030080475.1"/>
    <property type="gene ID" value="LOC115483272"/>
</dbReference>
<dbReference type="EnsemblMetazoa" id="XM_030224629.1">
    <property type="protein sequence ID" value="XP_030080489.1"/>
    <property type="gene ID" value="LOC115483286"/>
</dbReference>
<dbReference type="EnsemblMetazoa" id="XM_030224630.1">
    <property type="protein sequence ID" value="XP_030080490.1"/>
    <property type="gene ID" value="LOC115483287"/>
</dbReference>
<dbReference type="EnsemblMetazoa" id="XM_030224631.1">
    <property type="protein sequence ID" value="XP_030080491.1"/>
    <property type="gene ID" value="LOC115483288"/>
</dbReference>
<dbReference type="EnsemblMetazoa" id="XM_030224632.1">
    <property type="protein sequence ID" value="XP_030080492.1"/>
    <property type="gene ID" value="LOC115483289"/>
</dbReference>
<dbReference type="EnsemblMetazoa" id="XM_030224654.1">
    <property type="protein sequence ID" value="XP_030080514.1"/>
    <property type="gene ID" value="LOC115483301"/>
</dbReference>
<dbReference type="EnsemblMetazoa" id="XM_030224655.1">
    <property type="protein sequence ID" value="XP_030080515.1"/>
    <property type="gene ID" value="LOC115483302"/>
</dbReference>
<dbReference type="EnsemblMetazoa" id="XM_030224689.1">
    <property type="protein sequence ID" value="XP_030080549.1"/>
    <property type="gene ID" value="LOC115483312"/>
</dbReference>
<dbReference type="OrthoDB" id="8179904at2759"/>
<dbReference type="Proteomes" id="UP000504633">
    <property type="component" value="Unplaced"/>
</dbReference>
<dbReference type="GO" id="GO:0000786">
    <property type="term" value="C:nucleosome"/>
    <property type="evidence" value="ECO:0000250"/>
    <property type="project" value="UniProtKB"/>
</dbReference>
<dbReference type="GO" id="GO:0005634">
    <property type="term" value="C:nucleus"/>
    <property type="evidence" value="ECO:0007669"/>
    <property type="project" value="UniProtKB-SubCell"/>
</dbReference>
<dbReference type="GO" id="GO:0003677">
    <property type="term" value="F:DNA binding"/>
    <property type="evidence" value="ECO:0000250"/>
    <property type="project" value="UniProtKB"/>
</dbReference>
<dbReference type="GO" id="GO:0046982">
    <property type="term" value="F:protein heterodimerization activity"/>
    <property type="evidence" value="ECO:0007669"/>
    <property type="project" value="InterPro"/>
</dbReference>
<dbReference type="GO" id="GO:0030527">
    <property type="term" value="F:structural constituent of chromatin"/>
    <property type="evidence" value="ECO:0007669"/>
    <property type="project" value="InterPro"/>
</dbReference>
<dbReference type="GO" id="GO:0006334">
    <property type="term" value="P:nucleosome assembly"/>
    <property type="evidence" value="ECO:0000250"/>
    <property type="project" value="UniProtKB"/>
</dbReference>
<dbReference type="CDD" id="cd22912">
    <property type="entry name" value="HFD_H4"/>
    <property type="match status" value="1"/>
</dbReference>
<dbReference type="FunFam" id="1.10.20.10:FF:000002">
    <property type="entry name" value="Histone H4"/>
    <property type="match status" value="1"/>
</dbReference>
<dbReference type="Gene3D" id="1.10.20.10">
    <property type="entry name" value="Histone, subunit A"/>
    <property type="match status" value="1"/>
</dbReference>
<dbReference type="InterPro" id="IPR035425">
    <property type="entry name" value="CENP-T/H4_C"/>
</dbReference>
<dbReference type="InterPro" id="IPR009072">
    <property type="entry name" value="Histone-fold"/>
</dbReference>
<dbReference type="InterPro" id="IPR001951">
    <property type="entry name" value="Histone_H4"/>
</dbReference>
<dbReference type="InterPro" id="IPR019809">
    <property type="entry name" value="Histone_H4_CS"/>
</dbReference>
<dbReference type="InterPro" id="IPR004823">
    <property type="entry name" value="TAF_TATA-bd_Histone-like_dom"/>
</dbReference>
<dbReference type="PANTHER" id="PTHR10484">
    <property type="entry name" value="HISTONE H4"/>
    <property type="match status" value="1"/>
</dbReference>
<dbReference type="Pfam" id="PF15511">
    <property type="entry name" value="CENP-T_C"/>
    <property type="match status" value="1"/>
</dbReference>
<dbReference type="PRINTS" id="PR00623">
    <property type="entry name" value="HISTONEH4"/>
</dbReference>
<dbReference type="SMART" id="SM00417">
    <property type="entry name" value="H4"/>
    <property type="match status" value="1"/>
</dbReference>
<dbReference type="SMART" id="SM00803">
    <property type="entry name" value="TAF"/>
    <property type="match status" value="1"/>
</dbReference>
<dbReference type="SUPFAM" id="SSF47113">
    <property type="entry name" value="Histone-fold"/>
    <property type="match status" value="1"/>
</dbReference>
<dbReference type="PROSITE" id="PS00047">
    <property type="entry name" value="HISTONE_H4"/>
    <property type="match status" value="1"/>
</dbReference>
<protein>
    <recommendedName>
        <fullName>Histone H4</fullName>
    </recommendedName>
</protein>
<gene>
    <name type="primary">His4</name>
    <name type="synonym">H4</name>
</gene>
<gene>
    <name type="primary">His4r</name>
    <name type="synonym">H4r</name>
</gene>
<keyword id="KW-0007">Acetylation</keyword>
<keyword id="KW-0158">Chromosome</keyword>
<keyword id="KW-0238">DNA-binding</keyword>
<keyword id="KW-0488">Methylation</keyword>
<keyword id="KW-0544">Nucleosome core</keyword>
<keyword id="KW-0539">Nucleus</keyword>
<keyword id="KW-0597">Phosphoprotein</keyword>
<organism>
    <name type="scientific">Drosophila hydei</name>
    <name type="common">Fruit fly</name>
    <dbReference type="NCBI Taxonomy" id="7224"/>
    <lineage>
        <taxon>Eukaryota</taxon>
        <taxon>Metazoa</taxon>
        <taxon>Ecdysozoa</taxon>
        <taxon>Arthropoda</taxon>
        <taxon>Hexapoda</taxon>
        <taxon>Insecta</taxon>
        <taxon>Pterygota</taxon>
        <taxon>Neoptera</taxon>
        <taxon>Endopterygota</taxon>
        <taxon>Diptera</taxon>
        <taxon>Brachycera</taxon>
        <taxon>Muscomorpha</taxon>
        <taxon>Ephydroidea</taxon>
        <taxon>Drosophilidae</taxon>
        <taxon>Drosophila</taxon>
    </lineage>
</organism>
<feature type="initiator methionine" description="Removed" evidence="1">
    <location>
        <position position="1"/>
    </location>
</feature>
<feature type="chain" id="PRO_0000158303" description="Histone H4">
    <location>
        <begin position="2"/>
        <end position="103"/>
    </location>
</feature>
<feature type="DNA-binding region">
    <location>
        <begin position="17"/>
        <end position="21"/>
    </location>
</feature>
<feature type="region of interest" description="Disordered" evidence="4">
    <location>
        <begin position="1"/>
        <end position="20"/>
    </location>
</feature>
<feature type="compositionally biased region" description="Gly residues" evidence="4">
    <location>
        <begin position="1"/>
        <end position="14"/>
    </location>
</feature>
<feature type="modified residue" description="N6-acetyl-N6-methyllysine; alternate" evidence="2">
    <location>
        <position position="6"/>
    </location>
</feature>
<feature type="modified residue" description="N6-acetyllysine" evidence="3">
    <location>
        <position position="6"/>
    </location>
</feature>
<feature type="modified residue" description="N6-acetyl-N6-methyllysine; alternate" evidence="2">
    <location>
        <position position="13"/>
    </location>
</feature>
<feature type="modified residue" description="N6-acetyllysine" evidence="3">
    <location>
        <position position="13"/>
    </location>
</feature>
<feature type="modified residue" description="N6-succinyllysine" evidence="3">
    <location>
        <position position="32"/>
    </location>
</feature>
<feature type="modified residue" description="N6-succinyllysine" evidence="3">
    <location>
        <position position="78"/>
    </location>
</feature>
<feature type="modified residue" description="N6-succinyllysine" evidence="3">
    <location>
        <position position="80"/>
    </location>
</feature>
<feature type="modified residue" description="Phosphothreonine" evidence="3">
    <location>
        <position position="81"/>
    </location>
</feature>
<feature type="modified residue" description="Phosphothreonine" evidence="3">
    <location>
        <position position="83"/>
    </location>
</feature>
<feature type="modified residue" description="N6-succinyllysine" evidence="3">
    <location>
        <position position="92"/>
    </location>
</feature>
<name>H4_DROHY</name>
<comment type="function">
    <text>Core component of nucleosome. Nucleosomes wrap and compact DNA into chromatin, limiting DNA accessibility to the cellular machineries which require DNA as a template. Histones thereby play a central role in transcription regulation, DNA repair, DNA replication and chromosomal stability. DNA accessibility is regulated via a complex set of post-translational modifications of histones, also called histone code, and nucleosome remodeling.</text>
</comment>
<comment type="subunit">
    <text>The nucleosome is a histone octamer containing two molecules each of H2A, H2B, H3 and H4 assembled in one H3-H4 heterotetramer and two H2A-H2B heterodimers. The octamer wraps approximately 147 bp of DNA.</text>
</comment>
<comment type="subcellular location">
    <subcellularLocation>
        <location evidence="1">Nucleus</location>
    </subcellularLocation>
    <subcellularLocation>
        <location evidence="1">Chromosome</location>
    </subcellularLocation>
</comment>
<comment type="PTM">
    <text evidence="3">Acetylated on Lys-6 (H4K5ac) and Lys-13 (H4K12ac) during prophase I of meiosis. Phosphorylation of H2A 'Thr-119' is a prerequisite for H4 Lys-6 acetylation but not for H4 Lys-13 acetylation. Acetylated on Lys-6 and Lys-13 by the Ada2a-containing (ATAC) histone acetyltransferase complex.</text>
</comment>
<comment type="similarity">
    <text evidence="5">Belongs to the histone H4 family.</text>
</comment>
<accession>P84042</accession>
<accession>P02307</accession>
<accession>Q9VFH7</accession>